<reference key="1">
    <citation type="journal article" date="1996" name="Gene">
        <title>Structure and organization of the mouse elk1 gene.</title>
        <authorList>
            <person name="Grevin D."/>
            <person name="Ung S."/>
            <person name="Denhez F."/>
            <person name="Dehem M."/>
            <person name="Quatannens B."/>
            <person name="Begue A."/>
            <person name="Stehelin D."/>
            <person name="Martin P."/>
        </authorList>
    </citation>
    <scope>NUCLEOTIDE SEQUENCE [MRNA]</scope>
    <source>
        <strain>C57BL/6J</strain>
        <tissue>Embryo</tissue>
    </source>
</reference>
<reference key="2">
    <citation type="journal article" date="2005" name="Science">
        <title>The transcriptional landscape of the mammalian genome.</title>
        <authorList>
            <person name="Carninci P."/>
            <person name="Kasukawa T."/>
            <person name="Katayama S."/>
            <person name="Gough J."/>
            <person name="Frith M.C."/>
            <person name="Maeda N."/>
            <person name="Oyama R."/>
            <person name="Ravasi T."/>
            <person name="Lenhard B."/>
            <person name="Wells C."/>
            <person name="Kodzius R."/>
            <person name="Shimokawa K."/>
            <person name="Bajic V.B."/>
            <person name="Brenner S.E."/>
            <person name="Batalov S."/>
            <person name="Forrest A.R."/>
            <person name="Zavolan M."/>
            <person name="Davis M.J."/>
            <person name="Wilming L.G."/>
            <person name="Aidinis V."/>
            <person name="Allen J.E."/>
            <person name="Ambesi-Impiombato A."/>
            <person name="Apweiler R."/>
            <person name="Aturaliya R.N."/>
            <person name="Bailey T.L."/>
            <person name="Bansal M."/>
            <person name="Baxter L."/>
            <person name="Beisel K.W."/>
            <person name="Bersano T."/>
            <person name="Bono H."/>
            <person name="Chalk A.M."/>
            <person name="Chiu K.P."/>
            <person name="Choudhary V."/>
            <person name="Christoffels A."/>
            <person name="Clutterbuck D.R."/>
            <person name="Crowe M.L."/>
            <person name="Dalla E."/>
            <person name="Dalrymple B.P."/>
            <person name="de Bono B."/>
            <person name="Della Gatta G."/>
            <person name="di Bernardo D."/>
            <person name="Down T."/>
            <person name="Engstrom P."/>
            <person name="Fagiolini M."/>
            <person name="Faulkner G."/>
            <person name="Fletcher C.F."/>
            <person name="Fukushima T."/>
            <person name="Furuno M."/>
            <person name="Futaki S."/>
            <person name="Gariboldi M."/>
            <person name="Georgii-Hemming P."/>
            <person name="Gingeras T.R."/>
            <person name="Gojobori T."/>
            <person name="Green R.E."/>
            <person name="Gustincich S."/>
            <person name="Harbers M."/>
            <person name="Hayashi Y."/>
            <person name="Hensch T.K."/>
            <person name="Hirokawa N."/>
            <person name="Hill D."/>
            <person name="Huminiecki L."/>
            <person name="Iacono M."/>
            <person name="Ikeo K."/>
            <person name="Iwama A."/>
            <person name="Ishikawa T."/>
            <person name="Jakt M."/>
            <person name="Kanapin A."/>
            <person name="Katoh M."/>
            <person name="Kawasawa Y."/>
            <person name="Kelso J."/>
            <person name="Kitamura H."/>
            <person name="Kitano H."/>
            <person name="Kollias G."/>
            <person name="Krishnan S.P."/>
            <person name="Kruger A."/>
            <person name="Kummerfeld S.K."/>
            <person name="Kurochkin I.V."/>
            <person name="Lareau L.F."/>
            <person name="Lazarevic D."/>
            <person name="Lipovich L."/>
            <person name="Liu J."/>
            <person name="Liuni S."/>
            <person name="McWilliam S."/>
            <person name="Madan Babu M."/>
            <person name="Madera M."/>
            <person name="Marchionni L."/>
            <person name="Matsuda H."/>
            <person name="Matsuzawa S."/>
            <person name="Miki H."/>
            <person name="Mignone F."/>
            <person name="Miyake S."/>
            <person name="Morris K."/>
            <person name="Mottagui-Tabar S."/>
            <person name="Mulder N."/>
            <person name="Nakano N."/>
            <person name="Nakauchi H."/>
            <person name="Ng P."/>
            <person name="Nilsson R."/>
            <person name="Nishiguchi S."/>
            <person name="Nishikawa S."/>
            <person name="Nori F."/>
            <person name="Ohara O."/>
            <person name="Okazaki Y."/>
            <person name="Orlando V."/>
            <person name="Pang K.C."/>
            <person name="Pavan W.J."/>
            <person name="Pavesi G."/>
            <person name="Pesole G."/>
            <person name="Petrovsky N."/>
            <person name="Piazza S."/>
            <person name="Reed J."/>
            <person name="Reid J.F."/>
            <person name="Ring B.Z."/>
            <person name="Ringwald M."/>
            <person name="Rost B."/>
            <person name="Ruan Y."/>
            <person name="Salzberg S.L."/>
            <person name="Sandelin A."/>
            <person name="Schneider C."/>
            <person name="Schoenbach C."/>
            <person name="Sekiguchi K."/>
            <person name="Semple C.A."/>
            <person name="Seno S."/>
            <person name="Sessa L."/>
            <person name="Sheng Y."/>
            <person name="Shibata Y."/>
            <person name="Shimada H."/>
            <person name="Shimada K."/>
            <person name="Silva D."/>
            <person name="Sinclair B."/>
            <person name="Sperling S."/>
            <person name="Stupka E."/>
            <person name="Sugiura K."/>
            <person name="Sultana R."/>
            <person name="Takenaka Y."/>
            <person name="Taki K."/>
            <person name="Tammoja K."/>
            <person name="Tan S.L."/>
            <person name="Tang S."/>
            <person name="Taylor M.S."/>
            <person name="Tegner J."/>
            <person name="Teichmann S.A."/>
            <person name="Ueda H.R."/>
            <person name="van Nimwegen E."/>
            <person name="Verardo R."/>
            <person name="Wei C.L."/>
            <person name="Yagi K."/>
            <person name="Yamanishi H."/>
            <person name="Zabarovsky E."/>
            <person name="Zhu S."/>
            <person name="Zimmer A."/>
            <person name="Hide W."/>
            <person name="Bult C."/>
            <person name="Grimmond S.M."/>
            <person name="Teasdale R.D."/>
            <person name="Liu E.T."/>
            <person name="Brusic V."/>
            <person name="Quackenbush J."/>
            <person name="Wahlestedt C."/>
            <person name="Mattick J.S."/>
            <person name="Hume D.A."/>
            <person name="Kai C."/>
            <person name="Sasaki D."/>
            <person name="Tomaru Y."/>
            <person name="Fukuda S."/>
            <person name="Kanamori-Katayama M."/>
            <person name="Suzuki M."/>
            <person name="Aoki J."/>
            <person name="Arakawa T."/>
            <person name="Iida J."/>
            <person name="Imamura K."/>
            <person name="Itoh M."/>
            <person name="Kato T."/>
            <person name="Kawaji H."/>
            <person name="Kawagashira N."/>
            <person name="Kawashima T."/>
            <person name="Kojima M."/>
            <person name="Kondo S."/>
            <person name="Konno H."/>
            <person name="Nakano K."/>
            <person name="Ninomiya N."/>
            <person name="Nishio T."/>
            <person name="Okada M."/>
            <person name="Plessy C."/>
            <person name="Shibata K."/>
            <person name="Shiraki T."/>
            <person name="Suzuki S."/>
            <person name="Tagami M."/>
            <person name="Waki K."/>
            <person name="Watahiki A."/>
            <person name="Okamura-Oho Y."/>
            <person name="Suzuki H."/>
            <person name="Kawai J."/>
            <person name="Hayashizaki Y."/>
        </authorList>
    </citation>
    <scope>NUCLEOTIDE SEQUENCE [LARGE SCALE MRNA]</scope>
    <source>
        <strain>C57BL/6J</strain>
        <tissue>Head</tissue>
    </source>
</reference>
<reference key="3">
    <citation type="journal article" date="2009" name="PLoS Biol.">
        <title>Lineage-specific biology revealed by a finished genome assembly of the mouse.</title>
        <authorList>
            <person name="Church D.M."/>
            <person name="Goodstadt L."/>
            <person name="Hillier L.W."/>
            <person name="Zody M.C."/>
            <person name="Goldstein S."/>
            <person name="She X."/>
            <person name="Bult C.J."/>
            <person name="Agarwala R."/>
            <person name="Cherry J.L."/>
            <person name="DiCuccio M."/>
            <person name="Hlavina W."/>
            <person name="Kapustin Y."/>
            <person name="Meric P."/>
            <person name="Maglott D."/>
            <person name="Birtle Z."/>
            <person name="Marques A.C."/>
            <person name="Graves T."/>
            <person name="Zhou S."/>
            <person name="Teague B."/>
            <person name="Potamousis K."/>
            <person name="Churas C."/>
            <person name="Place M."/>
            <person name="Herschleb J."/>
            <person name="Runnheim R."/>
            <person name="Forrest D."/>
            <person name="Amos-Landgraf J."/>
            <person name="Schwartz D.C."/>
            <person name="Cheng Z."/>
            <person name="Lindblad-Toh K."/>
            <person name="Eichler E.E."/>
            <person name="Ponting C.P."/>
        </authorList>
    </citation>
    <scope>NUCLEOTIDE SEQUENCE [LARGE SCALE GENOMIC DNA]</scope>
    <source>
        <strain>C57BL/6J</strain>
    </source>
</reference>
<reference key="4">
    <citation type="submission" date="2005-09" db="EMBL/GenBank/DDBJ databases">
        <authorList>
            <person name="Mural R.J."/>
            <person name="Adams M.D."/>
            <person name="Myers E.W."/>
            <person name="Smith H.O."/>
            <person name="Venter J.C."/>
        </authorList>
    </citation>
    <scope>NUCLEOTIDE SEQUENCE [LARGE SCALE GENOMIC DNA]</scope>
</reference>
<reference key="5">
    <citation type="journal article" date="1994" name="Genes Dev.">
        <title>Net, a new ets transcription factor that is activated by Ras.</title>
        <authorList>
            <person name="Giovane A."/>
            <person name="Pintzas A."/>
            <person name="Maira S.-M."/>
            <person name="Sobieszczuk P."/>
            <person name="Wasylyk B."/>
        </authorList>
    </citation>
    <scope>NUCLEOTIDE SEQUENCE [MRNA] OF 5-224</scope>
    <source>
        <tissue>Embryo</tissue>
    </source>
</reference>
<name>ELK1_MOUSE</name>
<keyword id="KW-0010">Activator</keyword>
<keyword id="KW-0238">DNA-binding</keyword>
<keyword id="KW-0325">Glycoprotein</keyword>
<keyword id="KW-1017">Isopeptide bond</keyword>
<keyword id="KW-0539">Nucleus</keyword>
<keyword id="KW-0597">Phosphoprotein</keyword>
<keyword id="KW-1185">Reference proteome</keyword>
<keyword id="KW-0804">Transcription</keyword>
<keyword id="KW-0805">Transcription regulation</keyword>
<keyword id="KW-0832">Ubl conjugation</keyword>
<protein>
    <recommendedName>
        <fullName>ETS domain-containing protein Elk-1</fullName>
    </recommendedName>
</protein>
<proteinExistence type="evidence at protein level"/>
<feature type="chain" id="PRO_0000204096" description="ETS domain-containing protein Elk-1">
    <location>
        <begin position="1"/>
        <end position="429"/>
    </location>
</feature>
<feature type="DNA-binding region" description="ETS" evidence="3">
    <location>
        <begin position="5"/>
        <end position="86"/>
    </location>
</feature>
<feature type="region of interest" description="Disordered" evidence="4">
    <location>
        <begin position="119"/>
        <end position="146"/>
    </location>
</feature>
<feature type="region of interest" description="Disordered" evidence="4">
    <location>
        <begin position="165"/>
        <end position="204"/>
    </location>
</feature>
<feature type="region of interest" description="Disordered" evidence="4">
    <location>
        <begin position="227"/>
        <end position="253"/>
    </location>
</feature>
<feature type="region of interest" description="Disordered" evidence="4">
    <location>
        <begin position="302"/>
        <end position="354"/>
    </location>
</feature>
<feature type="region of interest" description="Sufficient for interaction with MAD2L2" evidence="2">
    <location>
        <begin position="350"/>
        <end position="400"/>
    </location>
</feature>
<feature type="compositionally biased region" description="Pro residues" evidence="4">
    <location>
        <begin position="169"/>
        <end position="178"/>
    </location>
</feature>
<feature type="compositionally biased region" description="Polar residues" evidence="4">
    <location>
        <begin position="302"/>
        <end position="312"/>
    </location>
</feature>
<feature type="modified residue" description="Phosphoserine; by MAPK1" evidence="2">
    <location>
        <position position="325"/>
    </location>
</feature>
<feature type="modified residue" description="Phosphothreonine; by MAPK1" evidence="2">
    <location>
        <position position="337"/>
    </location>
</feature>
<feature type="modified residue" description="Phosphothreonine; by MAPK1" evidence="2">
    <location>
        <position position="354"/>
    </location>
</feature>
<feature type="modified residue" description="Phosphothreonine; by MAPK1" evidence="2">
    <location>
        <position position="364"/>
    </location>
</feature>
<feature type="modified residue" description="Phosphothreonine; by MAPK1" evidence="2">
    <location>
        <position position="369"/>
    </location>
</feature>
<feature type="modified residue" description="Phosphoserine; by MAPK1 and MAPK8" evidence="2">
    <location>
        <position position="384"/>
    </location>
</feature>
<feature type="modified residue" description="Phosphoserine; by MAPK1" evidence="2">
    <location>
        <position position="390"/>
    </location>
</feature>
<feature type="modified residue" description="Phosphothreonine; by MAPK1" evidence="2">
    <location>
        <position position="418"/>
    </location>
</feature>
<feature type="modified residue" description="Phosphoserine; by MAPK1" evidence="2">
    <location>
        <position position="423"/>
    </location>
</feature>
<feature type="glycosylation site" description="O-linked (GlcNAc) threonine" evidence="2">
    <location>
        <position position="382"/>
    </location>
</feature>
<feature type="cross-link" description="Glycyl lysine isopeptide (Lys-Gly) (interchain with G-Cter in SUMO)" evidence="2">
    <location>
        <position position="231"/>
    </location>
</feature>
<feature type="cross-link" description="Glycyl lysine isopeptide (Lys-Gly) (interchain with G-Cter in SUMO)" evidence="2">
    <location>
        <position position="250"/>
    </location>
</feature>
<feature type="cross-link" description="Glycyl lysine isopeptide (Lys-Gly) (interchain with G-Cter in SUMO)" evidence="2">
    <location>
        <position position="255"/>
    </location>
</feature>
<feature type="sequence conflict" description="In Ref. 5; CAA85391." evidence="5" ref="5">
    <original>P</original>
    <variation>T</variation>
    <location>
        <position position="133"/>
    </location>
</feature>
<feature type="sequence conflict" description="In Ref. 1; CAA60715." evidence="5" ref="1">
    <original>V</original>
    <variation>A</variation>
    <location>
        <position position="249"/>
    </location>
</feature>
<dbReference type="EMBL" id="X87257">
    <property type="protein sequence ID" value="CAA60715.1"/>
    <property type="molecule type" value="mRNA"/>
</dbReference>
<dbReference type="EMBL" id="AK132354">
    <property type="protein sequence ID" value="BAE21121.1"/>
    <property type="molecule type" value="mRNA"/>
</dbReference>
<dbReference type="EMBL" id="AL671853">
    <property type="status" value="NOT_ANNOTATED_CDS"/>
    <property type="molecule type" value="Genomic_DNA"/>
</dbReference>
<dbReference type="EMBL" id="CH466625">
    <property type="protein sequence ID" value="EDL00733.1"/>
    <property type="molecule type" value="Genomic_DNA"/>
</dbReference>
<dbReference type="EMBL" id="Z36939">
    <property type="protein sequence ID" value="CAA85391.1"/>
    <property type="molecule type" value="mRNA"/>
</dbReference>
<dbReference type="CCDS" id="CCDS30048.1"/>
<dbReference type="PIR" id="JC4965">
    <property type="entry name" value="JC4965"/>
</dbReference>
<dbReference type="RefSeq" id="NP_031948.4">
    <property type="nucleotide sequence ID" value="NM_007922.5"/>
</dbReference>
<dbReference type="SMR" id="P41969"/>
<dbReference type="BioGRID" id="199429">
    <property type="interactions" value="5"/>
</dbReference>
<dbReference type="DIP" id="DIP-61141N"/>
<dbReference type="FunCoup" id="P41969">
    <property type="interactions" value="1331"/>
</dbReference>
<dbReference type="IntAct" id="P41969">
    <property type="interactions" value="1"/>
</dbReference>
<dbReference type="STRING" id="10090.ENSMUSP00000009550"/>
<dbReference type="GlyGen" id="P41969">
    <property type="glycosylation" value="2 sites, 1 O-linked glycan (1 site)"/>
</dbReference>
<dbReference type="iPTMnet" id="P41969"/>
<dbReference type="PhosphoSitePlus" id="P41969"/>
<dbReference type="PaxDb" id="10090-ENSMUSP00000009550"/>
<dbReference type="ProteomicsDB" id="275523"/>
<dbReference type="Pumba" id="P41969"/>
<dbReference type="Antibodypedia" id="3538">
    <property type="antibodies" value="1292 antibodies from 50 providers"/>
</dbReference>
<dbReference type="DNASU" id="13712"/>
<dbReference type="Ensembl" id="ENSMUST00000009550.14">
    <property type="protein sequence ID" value="ENSMUSP00000009550.8"/>
    <property type="gene ID" value="ENSMUSG00000009406.14"/>
</dbReference>
<dbReference type="GeneID" id="13712"/>
<dbReference type="KEGG" id="mmu:13712"/>
<dbReference type="UCSC" id="uc009suc.2">
    <property type="organism name" value="mouse"/>
</dbReference>
<dbReference type="AGR" id="MGI:101833"/>
<dbReference type="CTD" id="2002"/>
<dbReference type="MGI" id="MGI:101833">
    <property type="gene designation" value="Elk1"/>
</dbReference>
<dbReference type="VEuPathDB" id="HostDB:ENSMUSG00000009406"/>
<dbReference type="eggNOG" id="KOG3806">
    <property type="taxonomic scope" value="Eukaryota"/>
</dbReference>
<dbReference type="GeneTree" id="ENSGT00940000157571"/>
<dbReference type="HOGENOM" id="CLU_036905_0_0_1"/>
<dbReference type="InParanoid" id="P41969"/>
<dbReference type="OMA" id="LPSRYPW"/>
<dbReference type="OrthoDB" id="10067219at2759"/>
<dbReference type="PhylomeDB" id="P41969"/>
<dbReference type="TreeFam" id="TF317732"/>
<dbReference type="BioGRID-ORCS" id="13712">
    <property type="hits" value="0 hits in 81 CRISPR screens"/>
</dbReference>
<dbReference type="ChiTaRS" id="Elk1">
    <property type="organism name" value="mouse"/>
</dbReference>
<dbReference type="PRO" id="PR:P41969"/>
<dbReference type="Proteomes" id="UP000000589">
    <property type="component" value="Chromosome X"/>
</dbReference>
<dbReference type="RNAct" id="P41969">
    <property type="molecule type" value="protein"/>
</dbReference>
<dbReference type="Bgee" id="ENSMUSG00000009406">
    <property type="expression patterns" value="Expressed in rostral migratory stream and 242 other cell types or tissues"/>
</dbReference>
<dbReference type="GO" id="GO:0043679">
    <property type="term" value="C:axon terminus"/>
    <property type="evidence" value="ECO:0007669"/>
    <property type="project" value="Ensembl"/>
</dbReference>
<dbReference type="GO" id="GO:0030425">
    <property type="term" value="C:dendrite"/>
    <property type="evidence" value="ECO:0007669"/>
    <property type="project" value="Ensembl"/>
</dbReference>
<dbReference type="GO" id="GO:0031966">
    <property type="term" value="C:mitochondrial membrane"/>
    <property type="evidence" value="ECO:0007669"/>
    <property type="project" value="Ensembl"/>
</dbReference>
<dbReference type="GO" id="GO:0043025">
    <property type="term" value="C:neuronal cell body"/>
    <property type="evidence" value="ECO:0007669"/>
    <property type="project" value="Ensembl"/>
</dbReference>
<dbReference type="GO" id="GO:0005654">
    <property type="term" value="C:nucleoplasm"/>
    <property type="evidence" value="ECO:0000304"/>
    <property type="project" value="Reactome"/>
</dbReference>
<dbReference type="GO" id="GO:0003682">
    <property type="term" value="F:chromatin binding"/>
    <property type="evidence" value="ECO:0007669"/>
    <property type="project" value="Ensembl"/>
</dbReference>
<dbReference type="GO" id="GO:0001228">
    <property type="term" value="F:DNA-binding transcription activator activity, RNA polymerase II-specific"/>
    <property type="evidence" value="ECO:0007669"/>
    <property type="project" value="Ensembl"/>
</dbReference>
<dbReference type="GO" id="GO:0003700">
    <property type="term" value="F:DNA-binding transcription factor activity"/>
    <property type="evidence" value="ECO:0000314"/>
    <property type="project" value="MGI"/>
</dbReference>
<dbReference type="GO" id="GO:0000981">
    <property type="term" value="F:DNA-binding transcription factor activity, RNA polymerase II-specific"/>
    <property type="evidence" value="ECO:0000250"/>
    <property type="project" value="UniProtKB"/>
</dbReference>
<dbReference type="GO" id="GO:0036033">
    <property type="term" value="F:mediator complex binding"/>
    <property type="evidence" value="ECO:0000353"/>
    <property type="project" value="DisProt"/>
</dbReference>
<dbReference type="GO" id="GO:0000978">
    <property type="term" value="F:RNA polymerase II cis-regulatory region sequence-specific DNA binding"/>
    <property type="evidence" value="ECO:0007669"/>
    <property type="project" value="Ensembl"/>
</dbReference>
<dbReference type="GO" id="GO:0061629">
    <property type="term" value="F:RNA polymerase II-specific DNA-binding transcription factor binding"/>
    <property type="evidence" value="ECO:0007669"/>
    <property type="project" value="Ensembl"/>
</dbReference>
<dbReference type="GO" id="GO:0140537">
    <property type="term" value="F:transcription regulator activator activity"/>
    <property type="evidence" value="ECO:0000315"/>
    <property type="project" value="DisProt"/>
</dbReference>
<dbReference type="GO" id="GO:0140416">
    <property type="term" value="F:transcription regulator inhibitor activity"/>
    <property type="evidence" value="ECO:0000315"/>
    <property type="project" value="DisProt"/>
</dbReference>
<dbReference type="GO" id="GO:0071480">
    <property type="term" value="P:cellular response to gamma radiation"/>
    <property type="evidence" value="ECO:0007669"/>
    <property type="project" value="Ensembl"/>
</dbReference>
<dbReference type="GO" id="GO:0071394">
    <property type="term" value="P:cellular response to testosterone stimulus"/>
    <property type="evidence" value="ECO:0007669"/>
    <property type="project" value="Ensembl"/>
</dbReference>
<dbReference type="GO" id="GO:0010467">
    <property type="term" value="P:gene expression"/>
    <property type="evidence" value="ECO:0000315"/>
    <property type="project" value="MGI"/>
</dbReference>
<dbReference type="GO" id="GO:0110088">
    <property type="term" value="P:hippocampal neuron apoptotic process"/>
    <property type="evidence" value="ECO:0007669"/>
    <property type="project" value="Ensembl"/>
</dbReference>
<dbReference type="GO" id="GO:0001889">
    <property type="term" value="P:liver development"/>
    <property type="evidence" value="ECO:0000315"/>
    <property type="project" value="MGI"/>
</dbReference>
<dbReference type="GO" id="GO:0030324">
    <property type="term" value="P:lung development"/>
    <property type="evidence" value="ECO:0000315"/>
    <property type="project" value="MGI"/>
</dbReference>
<dbReference type="GO" id="GO:0045893">
    <property type="term" value="P:positive regulation of DNA-templated transcription"/>
    <property type="evidence" value="ECO:0000314"/>
    <property type="project" value="MGI"/>
</dbReference>
<dbReference type="GO" id="GO:0045944">
    <property type="term" value="P:positive regulation of transcription by RNA polymerase II"/>
    <property type="evidence" value="ECO:0000250"/>
    <property type="project" value="UniProtKB"/>
</dbReference>
<dbReference type="GO" id="GO:0006355">
    <property type="term" value="P:regulation of DNA-templated transcription"/>
    <property type="evidence" value="ECO:0000314"/>
    <property type="project" value="MGI"/>
</dbReference>
<dbReference type="GO" id="GO:0045471">
    <property type="term" value="P:response to ethanol"/>
    <property type="evidence" value="ECO:0007669"/>
    <property type="project" value="Ensembl"/>
</dbReference>
<dbReference type="GO" id="GO:0071774">
    <property type="term" value="P:response to fibroblast growth factor"/>
    <property type="evidence" value="ECO:0000250"/>
    <property type="project" value="UniProtKB"/>
</dbReference>
<dbReference type="GO" id="GO:0009416">
    <property type="term" value="P:response to light stimulus"/>
    <property type="evidence" value="ECO:0007669"/>
    <property type="project" value="Ensembl"/>
</dbReference>
<dbReference type="DisProt" id="DP01578"/>
<dbReference type="FunFam" id="1.10.10.10:FF:000365">
    <property type="entry name" value="ETS domain-containing protein Elk-1 isoform a"/>
    <property type="match status" value="1"/>
</dbReference>
<dbReference type="Gene3D" id="1.10.10.10">
    <property type="entry name" value="Winged helix-like DNA-binding domain superfamily/Winged helix DNA-binding domain"/>
    <property type="match status" value="1"/>
</dbReference>
<dbReference type="InterPro" id="IPR000418">
    <property type="entry name" value="Ets_dom"/>
</dbReference>
<dbReference type="InterPro" id="IPR046328">
    <property type="entry name" value="ETS_fam"/>
</dbReference>
<dbReference type="InterPro" id="IPR036388">
    <property type="entry name" value="WH-like_DNA-bd_sf"/>
</dbReference>
<dbReference type="InterPro" id="IPR036390">
    <property type="entry name" value="WH_DNA-bd_sf"/>
</dbReference>
<dbReference type="PANTHER" id="PTHR11849">
    <property type="entry name" value="ETS"/>
    <property type="match status" value="1"/>
</dbReference>
<dbReference type="PANTHER" id="PTHR11849:SF178">
    <property type="entry name" value="ETS DOMAIN-CONTAINING PROTEIN ELK-1"/>
    <property type="match status" value="1"/>
</dbReference>
<dbReference type="Pfam" id="PF00178">
    <property type="entry name" value="Ets"/>
    <property type="match status" value="1"/>
</dbReference>
<dbReference type="PRINTS" id="PR00454">
    <property type="entry name" value="ETSDOMAIN"/>
</dbReference>
<dbReference type="SMART" id="SM00413">
    <property type="entry name" value="ETS"/>
    <property type="match status" value="1"/>
</dbReference>
<dbReference type="SUPFAM" id="SSF46785">
    <property type="entry name" value="Winged helix' DNA-binding domain"/>
    <property type="match status" value="1"/>
</dbReference>
<dbReference type="PROSITE" id="PS00345">
    <property type="entry name" value="ETS_DOMAIN_1"/>
    <property type="match status" value="1"/>
</dbReference>
<dbReference type="PROSITE" id="PS00346">
    <property type="entry name" value="ETS_DOMAIN_2"/>
    <property type="match status" value="1"/>
</dbReference>
<dbReference type="PROSITE" id="PS50061">
    <property type="entry name" value="ETS_DOMAIN_3"/>
    <property type="match status" value="1"/>
</dbReference>
<organism>
    <name type="scientific">Mus musculus</name>
    <name type="common">Mouse</name>
    <dbReference type="NCBI Taxonomy" id="10090"/>
    <lineage>
        <taxon>Eukaryota</taxon>
        <taxon>Metazoa</taxon>
        <taxon>Chordata</taxon>
        <taxon>Craniata</taxon>
        <taxon>Vertebrata</taxon>
        <taxon>Euteleostomi</taxon>
        <taxon>Mammalia</taxon>
        <taxon>Eutheria</taxon>
        <taxon>Euarchontoglires</taxon>
        <taxon>Glires</taxon>
        <taxon>Rodentia</taxon>
        <taxon>Myomorpha</taxon>
        <taxon>Muroidea</taxon>
        <taxon>Muridae</taxon>
        <taxon>Murinae</taxon>
        <taxon>Mus</taxon>
        <taxon>Mus</taxon>
    </lineage>
</organism>
<accession>P41969</accession>
<accession>Q3V1M9</accession>
<comment type="function">
    <text evidence="1 2">Transcription factor that binds to purine-rich DNA sequences. Forms a ternary complex with SRF and the ETS and SRF motifs of the serum response element (SRE) on the promoter region of immediate early genes such as FOS and IER2 (By similarity). Induces target gene transcription upon JNK and MAPK-signaling pathways stimulation (By similarity).</text>
</comment>
<comment type="subunit">
    <text evidence="2">Interacts in its sumoylated form with PIAS2/PIASX which enhances its transcriptional activator activity. Interacts with MAD2L2; the interaction is direct and promotes phosphorylation by the kinases MAPK8 and/or MAPK9. Interacts with POU1F1.</text>
</comment>
<comment type="interaction">
    <interactant intactId="EBI-15576110">
        <id>P41969</id>
    </interactant>
    <interactant intactId="EBI-773103">
        <id>P30275</id>
        <label>Ckmt1</label>
    </interactant>
    <organismsDiffer>false</organismsDiffer>
    <experiments>2</experiments>
</comment>
<comment type="subcellular location">
    <subcellularLocation>
        <location>Nucleus</location>
    </subcellularLocation>
</comment>
<comment type="tissue specificity">
    <text>Predominantly expressed in the brain, and to a lesser extent in the heart, liver and muscle.</text>
</comment>
<comment type="PTM">
    <text evidence="2">Sumoylation represses transcriptional activator activity as it results in recruitment of HDAC2 to target gene promoters which leads to decreased histone acetylation and reduced transactivator activity. It also regulates nuclear retention (By similarity).</text>
</comment>
<comment type="PTM">
    <text evidence="1 2">On mitogenic stimulation, phosphorylated on C-terminal serine and threonine residues by MAPK1 but also MAPK8 and/or MAPK9. Phosphorylation leads to loss of sumoylation and restores transcriptional activator activity. Phosphorylated and activated by CaMK4, MAPK11, MAPK12 and MAPK14 (By similarity). Upon bFGF stimulus, phosphorylated by PAK1 (By similarity). Phosphorylated by PRP4K at Thr-418; phosphorylation activation ELK1 transcriptional activity (By similarity).</text>
</comment>
<comment type="similarity">
    <text evidence="5">Belongs to the ETS family.</text>
</comment>
<sequence length="429" mass="45271">MDPSVTLWQFLLQLLREQGNGHIISWTSRDGGEFKLVDAEEVARLWGLRKNKTNMNYDKLSRALRYYYDKNIIRKVSGQKFVYKFVSYPEVAGCSTEDCPPQPEVSVTSAIAMAPATVHAGPGDTATGKPGTPKGAGMTGQGGLARSSRNEYMRSGLYSTFTIQSLQPQPQPPIPPRPASVLPNTTPAGVPAPASGSRSTSPNPLEACLEAEEAGLPLQVILTPPEAPNQKSEELSLDPSFGHPQPPEVKVEGPKEELEAARAGGFSSEAVKAEPEVSASEGLLARLPAILTENTAQVCGLSTSTTEITQPQKGRKPRDLELPLSPSLLGGQGPERTPGSGTSSGLQAPGPALTPSLLPTHTLTPVLLTPSSLPPSIHFWSTLSPIAPRSPAKLSFQFPSSGSAQVHIPSISVDGLSTPVVLSPGPQKP</sequence>
<gene>
    <name evidence="6" type="primary">Elk1</name>
</gene>
<evidence type="ECO:0000250" key="1">
    <source>
        <dbReference type="UniProtKB" id="A4GTP4"/>
    </source>
</evidence>
<evidence type="ECO:0000250" key="2">
    <source>
        <dbReference type="UniProtKB" id="P19419"/>
    </source>
</evidence>
<evidence type="ECO:0000255" key="3">
    <source>
        <dbReference type="PROSITE-ProRule" id="PRU00237"/>
    </source>
</evidence>
<evidence type="ECO:0000256" key="4">
    <source>
        <dbReference type="SAM" id="MobiDB-lite"/>
    </source>
</evidence>
<evidence type="ECO:0000305" key="5"/>
<evidence type="ECO:0000312" key="6">
    <source>
        <dbReference type="MGI" id="MGI:101833"/>
    </source>
</evidence>